<feature type="chain" id="PRO_0000230734" description="Small ribosomal subunit protein uS3">
    <location>
        <begin position="1"/>
        <end position="217"/>
    </location>
</feature>
<feature type="domain" description="KH type-2" evidence="1">
    <location>
        <begin position="38"/>
        <end position="106"/>
    </location>
</feature>
<protein>
    <recommendedName>
        <fullName evidence="1">Small ribosomal subunit protein uS3</fullName>
    </recommendedName>
    <alternativeName>
        <fullName evidence="2">30S ribosomal protein S3</fullName>
    </alternativeName>
</protein>
<comment type="function">
    <text evidence="1">Binds the lower part of the 30S subunit head. Binds mRNA in the 70S ribosome, positioning it for translation.</text>
</comment>
<comment type="subunit">
    <text evidence="1">Part of the 30S ribosomal subunit. Forms a tight complex with proteins S10 and S14.</text>
</comment>
<comment type="similarity">
    <text evidence="1">Belongs to the universal ribosomal protein uS3 family.</text>
</comment>
<sequence>MGQKVHPIGLRVGIIRDWDAKWYAEKEYADYLHEDLAIRKFIQKELADASVSTIEIVRAVNKVIVSLHTAKPGMVIGKGGSNVDALRAQLNKLTGKQVHINIVEIKKPDLDAHLVGETIARQLEQRVAFRRAQKQAIQRAMRAGAKGIKTQVSGRLNGADIARAEGYSEGTVPLHTLRADIDYAWEEADTTYGKLGVKVWIYRGEVLPARKNTKGGK</sequence>
<gene>
    <name evidence="1" type="primary">rpsC</name>
    <name type="ordered locus">stu1928</name>
</gene>
<reference key="1">
    <citation type="journal article" date="2004" name="Nat. Biotechnol.">
        <title>Complete sequence and comparative genome analysis of the dairy bacterium Streptococcus thermophilus.</title>
        <authorList>
            <person name="Bolotin A."/>
            <person name="Quinquis B."/>
            <person name="Renault P."/>
            <person name="Sorokin A."/>
            <person name="Ehrlich S.D."/>
            <person name="Kulakauskas S."/>
            <person name="Lapidus A."/>
            <person name="Goltsman E."/>
            <person name="Mazur M."/>
            <person name="Pusch G.D."/>
            <person name="Fonstein M."/>
            <person name="Overbeek R."/>
            <person name="Kyprides N."/>
            <person name="Purnelle B."/>
            <person name="Prozzi D."/>
            <person name="Ngui K."/>
            <person name="Masuy D."/>
            <person name="Hancy F."/>
            <person name="Burteau S."/>
            <person name="Boutry M."/>
            <person name="Delcour J."/>
            <person name="Goffeau A."/>
            <person name="Hols P."/>
        </authorList>
    </citation>
    <scope>NUCLEOTIDE SEQUENCE [LARGE SCALE GENOMIC DNA]</scope>
    <source>
        <strain>ATCC BAA-250 / LMG 18311</strain>
    </source>
</reference>
<name>RS3_STRT2</name>
<accession>Q5M2B9</accession>
<dbReference type="EMBL" id="CP000023">
    <property type="protein sequence ID" value="AAV61526.1"/>
    <property type="molecule type" value="Genomic_DNA"/>
</dbReference>
<dbReference type="RefSeq" id="WP_002952158.1">
    <property type="nucleotide sequence ID" value="NC_006448.1"/>
</dbReference>
<dbReference type="SMR" id="Q5M2B9"/>
<dbReference type="STRING" id="264199.stu1928"/>
<dbReference type="GeneID" id="66899656"/>
<dbReference type="KEGG" id="stl:stu1928"/>
<dbReference type="PATRIC" id="fig|264199.4.peg.1913"/>
<dbReference type="eggNOG" id="COG0092">
    <property type="taxonomic scope" value="Bacteria"/>
</dbReference>
<dbReference type="HOGENOM" id="CLU_058591_0_2_9"/>
<dbReference type="Proteomes" id="UP000001170">
    <property type="component" value="Chromosome"/>
</dbReference>
<dbReference type="GO" id="GO:0022627">
    <property type="term" value="C:cytosolic small ribosomal subunit"/>
    <property type="evidence" value="ECO:0007669"/>
    <property type="project" value="TreeGrafter"/>
</dbReference>
<dbReference type="GO" id="GO:0003729">
    <property type="term" value="F:mRNA binding"/>
    <property type="evidence" value="ECO:0007669"/>
    <property type="project" value="UniProtKB-UniRule"/>
</dbReference>
<dbReference type="GO" id="GO:0019843">
    <property type="term" value="F:rRNA binding"/>
    <property type="evidence" value="ECO:0007669"/>
    <property type="project" value="UniProtKB-UniRule"/>
</dbReference>
<dbReference type="GO" id="GO:0003735">
    <property type="term" value="F:structural constituent of ribosome"/>
    <property type="evidence" value="ECO:0007669"/>
    <property type="project" value="InterPro"/>
</dbReference>
<dbReference type="GO" id="GO:0006412">
    <property type="term" value="P:translation"/>
    <property type="evidence" value="ECO:0007669"/>
    <property type="project" value="UniProtKB-UniRule"/>
</dbReference>
<dbReference type="CDD" id="cd02412">
    <property type="entry name" value="KH-II_30S_S3"/>
    <property type="match status" value="1"/>
</dbReference>
<dbReference type="FunFam" id="3.30.1140.32:FF:000001">
    <property type="entry name" value="30S ribosomal protein S3"/>
    <property type="match status" value="1"/>
</dbReference>
<dbReference type="FunFam" id="3.30.300.20:FF:000001">
    <property type="entry name" value="30S ribosomal protein S3"/>
    <property type="match status" value="1"/>
</dbReference>
<dbReference type="Gene3D" id="3.30.300.20">
    <property type="match status" value="1"/>
</dbReference>
<dbReference type="Gene3D" id="3.30.1140.32">
    <property type="entry name" value="Ribosomal protein S3, C-terminal domain"/>
    <property type="match status" value="1"/>
</dbReference>
<dbReference type="HAMAP" id="MF_01309_B">
    <property type="entry name" value="Ribosomal_uS3_B"/>
    <property type="match status" value="1"/>
</dbReference>
<dbReference type="InterPro" id="IPR004087">
    <property type="entry name" value="KH_dom"/>
</dbReference>
<dbReference type="InterPro" id="IPR015946">
    <property type="entry name" value="KH_dom-like_a/b"/>
</dbReference>
<dbReference type="InterPro" id="IPR004044">
    <property type="entry name" value="KH_dom_type_2"/>
</dbReference>
<dbReference type="InterPro" id="IPR009019">
    <property type="entry name" value="KH_sf_prok-type"/>
</dbReference>
<dbReference type="InterPro" id="IPR036419">
    <property type="entry name" value="Ribosomal_S3_C_sf"/>
</dbReference>
<dbReference type="InterPro" id="IPR005704">
    <property type="entry name" value="Ribosomal_uS3_bac-typ"/>
</dbReference>
<dbReference type="InterPro" id="IPR001351">
    <property type="entry name" value="Ribosomal_uS3_C"/>
</dbReference>
<dbReference type="InterPro" id="IPR018280">
    <property type="entry name" value="Ribosomal_uS3_CS"/>
</dbReference>
<dbReference type="NCBIfam" id="TIGR01009">
    <property type="entry name" value="rpsC_bact"/>
    <property type="match status" value="1"/>
</dbReference>
<dbReference type="PANTHER" id="PTHR11760">
    <property type="entry name" value="30S/40S RIBOSOMAL PROTEIN S3"/>
    <property type="match status" value="1"/>
</dbReference>
<dbReference type="PANTHER" id="PTHR11760:SF19">
    <property type="entry name" value="SMALL RIBOSOMAL SUBUNIT PROTEIN US3C"/>
    <property type="match status" value="1"/>
</dbReference>
<dbReference type="Pfam" id="PF07650">
    <property type="entry name" value="KH_2"/>
    <property type="match status" value="1"/>
</dbReference>
<dbReference type="Pfam" id="PF00189">
    <property type="entry name" value="Ribosomal_S3_C"/>
    <property type="match status" value="1"/>
</dbReference>
<dbReference type="SMART" id="SM00322">
    <property type="entry name" value="KH"/>
    <property type="match status" value="1"/>
</dbReference>
<dbReference type="SUPFAM" id="SSF54814">
    <property type="entry name" value="Prokaryotic type KH domain (KH-domain type II)"/>
    <property type="match status" value="1"/>
</dbReference>
<dbReference type="SUPFAM" id="SSF54821">
    <property type="entry name" value="Ribosomal protein S3 C-terminal domain"/>
    <property type="match status" value="1"/>
</dbReference>
<dbReference type="PROSITE" id="PS50823">
    <property type="entry name" value="KH_TYPE_2"/>
    <property type="match status" value="1"/>
</dbReference>
<dbReference type="PROSITE" id="PS00548">
    <property type="entry name" value="RIBOSOMAL_S3"/>
    <property type="match status" value="1"/>
</dbReference>
<organism>
    <name type="scientific">Streptococcus thermophilus (strain ATCC BAA-250 / LMG 18311)</name>
    <dbReference type="NCBI Taxonomy" id="264199"/>
    <lineage>
        <taxon>Bacteria</taxon>
        <taxon>Bacillati</taxon>
        <taxon>Bacillota</taxon>
        <taxon>Bacilli</taxon>
        <taxon>Lactobacillales</taxon>
        <taxon>Streptococcaceae</taxon>
        <taxon>Streptococcus</taxon>
    </lineage>
</organism>
<evidence type="ECO:0000255" key="1">
    <source>
        <dbReference type="HAMAP-Rule" id="MF_01309"/>
    </source>
</evidence>
<evidence type="ECO:0000305" key="2"/>
<keyword id="KW-1185">Reference proteome</keyword>
<keyword id="KW-0687">Ribonucleoprotein</keyword>
<keyword id="KW-0689">Ribosomal protein</keyword>
<keyword id="KW-0694">RNA-binding</keyword>
<keyword id="KW-0699">rRNA-binding</keyword>
<proteinExistence type="inferred from homology"/>